<gene>
    <name evidence="1" type="primary">atpF</name>
    <name type="ordered locus">PST_4195</name>
</gene>
<protein>
    <recommendedName>
        <fullName evidence="1">ATP synthase subunit b</fullName>
    </recommendedName>
    <alternativeName>
        <fullName evidence="1">ATP synthase F(0) sector subunit b</fullName>
    </alternativeName>
    <alternativeName>
        <fullName evidence="1">ATPase subunit I</fullName>
    </alternativeName>
    <alternativeName>
        <fullName evidence="1">F-type ATPase subunit b</fullName>
        <shortName evidence="1">F-ATPase subunit b</shortName>
    </alternativeName>
</protein>
<dbReference type="EMBL" id="CP000304">
    <property type="protein sequence ID" value="ABP81817.1"/>
    <property type="molecule type" value="Genomic_DNA"/>
</dbReference>
<dbReference type="RefSeq" id="WP_011915195.1">
    <property type="nucleotide sequence ID" value="NC_009434.1"/>
</dbReference>
<dbReference type="SMR" id="A4VS66"/>
<dbReference type="KEGG" id="psa:PST_4195"/>
<dbReference type="eggNOG" id="COG0711">
    <property type="taxonomic scope" value="Bacteria"/>
</dbReference>
<dbReference type="HOGENOM" id="CLU_079215_4_5_6"/>
<dbReference type="Proteomes" id="UP000000233">
    <property type="component" value="Chromosome"/>
</dbReference>
<dbReference type="GO" id="GO:0005886">
    <property type="term" value="C:plasma membrane"/>
    <property type="evidence" value="ECO:0007669"/>
    <property type="project" value="UniProtKB-SubCell"/>
</dbReference>
<dbReference type="GO" id="GO:0045259">
    <property type="term" value="C:proton-transporting ATP synthase complex"/>
    <property type="evidence" value="ECO:0007669"/>
    <property type="project" value="UniProtKB-KW"/>
</dbReference>
<dbReference type="GO" id="GO:0046933">
    <property type="term" value="F:proton-transporting ATP synthase activity, rotational mechanism"/>
    <property type="evidence" value="ECO:0007669"/>
    <property type="project" value="UniProtKB-UniRule"/>
</dbReference>
<dbReference type="GO" id="GO:0046961">
    <property type="term" value="F:proton-transporting ATPase activity, rotational mechanism"/>
    <property type="evidence" value="ECO:0007669"/>
    <property type="project" value="TreeGrafter"/>
</dbReference>
<dbReference type="CDD" id="cd06503">
    <property type="entry name" value="ATP-synt_Fo_b"/>
    <property type="match status" value="1"/>
</dbReference>
<dbReference type="FunFam" id="1.20.5.620:FF:000001">
    <property type="entry name" value="ATP synthase subunit b"/>
    <property type="match status" value="1"/>
</dbReference>
<dbReference type="Gene3D" id="1.20.5.620">
    <property type="entry name" value="F1F0 ATP synthase subunit B, membrane domain"/>
    <property type="match status" value="1"/>
</dbReference>
<dbReference type="HAMAP" id="MF_01398">
    <property type="entry name" value="ATP_synth_b_bprime"/>
    <property type="match status" value="1"/>
</dbReference>
<dbReference type="InterPro" id="IPR028987">
    <property type="entry name" value="ATP_synth_B-like_membr_sf"/>
</dbReference>
<dbReference type="InterPro" id="IPR002146">
    <property type="entry name" value="ATP_synth_b/b'su_bac/chlpt"/>
</dbReference>
<dbReference type="InterPro" id="IPR005864">
    <property type="entry name" value="ATP_synth_F0_bsu_bac"/>
</dbReference>
<dbReference type="InterPro" id="IPR050059">
    <property type="entry name" value="ATP_synthase_B_chain"/>
</dbReference>
<dbReference type="NCBIfam" id="TIGR01144">
    <property type="entry name" value="ATP_synt_b"/>
    <property type="match status" value="1"/>
</dbReference>
<dbReference type="NCBIfam" id="NF004411">
    <property type="entry name" value="PRK05759.1-2"/>
    <property type="match status" value="1"/>
</dbReference>
<dbReference type="PANTHER" id="PTHR33445:SF1">
    <property type="entry name" value="ATP SYNTHASE SUBUNIT B"/>
    <property type="match status" value="1"/>
</dbReference>
<dbReference type="PANTHER" id="PTHR33445">
    <property type="entry name" value="ATP SYNTHASE SUBUNIT B', CHLOROPLASTIC"/>
    <property type="match status" value="1"/>
</dbReference>
<dbReference type="Pfam" id="PF00430">
    <property type="entry name" value="ATP-synt_B"/>
    <property type="match status" value="1"/>
</dbReference>
<dbReference type="SUPFAM" id="SSF81573">
    <property type="entry name" value="F1F0 ATP synthase subunit B, membrane domain"/>
    <property type="match status" value="1"/>
</dbReference>
<sequence length="156" mass="17193">MNINLTLFGQTLAFAIFVWFCMKLVWPPITAAMAARQKKIAEGLDAAGRAQQDLKLAQDKVSHTLRETKEQAAQIIEQANKHANAIIEEAKQQARVEGERLVAGARAEIEQEVNRARDQLRSQVAALAVAGAEKILESQVDAKVHNELVEKLASQL</sequence>
<keyword id="KW-0066">ATP synthesis</keyword>
<keyword id="KW-0997">Cell inner membrane</keyword>
<keyword id="KW-1003">Cell membrane</keyword>
<keyword id="KW-0138">CF(0)</keyword>
<keyword id="KW-0375">Hydrogen ion transport</keyword>
<keyword id="KW-0406">Ion transport</keyword>
<keyword id="KW-0472">Membrane</keyword>
<keyword id="KW-1185">Reference proteome</keyword>
<keyword id="KW-0812">Transmembrane</keyword>
<keyword id="KW-1133">Transmembrane helix</keyword>
<keyword id="KW-0813">Transport</keyword>
<evidence type="ECO:0000255" key="1">
    <source>
        <dbReference type="HAMAP-Rule" id="MF_01398"/>
    </source>
</evidence>
<organism>
    <name type="scientific">Stutzerimonas stutzeri (strain A1501)</name>
    <name type="common">Pseudomonas stutzeri</name>
    <dbReference type="NCBI Taxonomy" id="379731"/>
    <lineage>
        <taxon>Bacteria</taxon>
        <taxon>Pseudomonadati</taxon>
        <taxon>Pseudomonadota</taxon>
        <taxon>Gammaproteobacteria</taxon>
        <taxon>Pseudomonadales</taxon>
        <taxon>Pseudomonadaceae</taxon>
        <taxon>Stutzerimonas</taxon>
    </lineage>
</organism>
<name>ATPF_STUS1</name>
<reference key="1">
    <citation type="journal article" date="2008" name="Proc. Natl. Acad. Sci. U.S.A.">
        <title>Nitrogen fixation island and rhizosphere competence traits in the genome of root-associated Pseudomonas stutzeri A1501.</title>
        <authorList>
            <person name="Yan Y."/>
            <person name="Yang J."/>
            <person name="Dou Y."/>
            <person name="Chen M."/>
            <person name="Ping S."/>
            <person name="Peng J."/>
            <person name="Lu W."/>
            <person name="Zhang W."/>
            <person name="Yao Z."/>
            <person name="Li H."/>
            <person name="Liu W."/>
            <person name="He S."/>
            <person name="Geng L."/>
            <person name="Zhang X."/>
            <person name="Yang F."/>
            <person name="Yu H."/>
            <person name="Zhan Y."/>
            <person name="Li D."/>
            <person name="Lin Z."/>
            <person name="Wang Y."/>
            <person name="Elmerich C."/>
            <person name="Lin M."/>
            <person name="Jin Q."/>
        </authorList>
    </citation>
    <scope>NUCLEOTIDE SEQUENCE [LARGE SCALE GENOMIC DNA]</scope>
    <source>
        <strain>A1501</strain>
    </source>
</reference>
<feature type="chain" id="PRO_0000368693" description="ATP synthase subunit b">
    <location>
        <begin position="1"/>
        <end position="156"/>
    </location>
</feature>
<feature type="transmembrane region" description="Helical" evidence="1">
    <location>
        <begin position="12"/>
        <end position="32"/>
    </location>
</feature>
<comment type="function">
    <text evidence="1">F(1)F(0) ATP synthase produces ATP from ADP in the presence of a proton or sodium gradient. F-type ATPases consist of two structural domains, F(1) containing the extramembraneous catalytic core and F(0) containing the membrane proton channel, linked together by a central stalk and a peripheral stalk. During catalysis, ATP synthesis in the catalytic domain of F(1) is coupled via a rotary mechanism of the central stalk subunits to proton translocation.</text>
</comment>
<comment type="function">
    <text evidence="1">Component of the F(0) channel, it forms part of the peripheral stalk, linking F(1) to F(0).</text>
</comment>
<comment type="subunit">
    <text evidence="1">F-type ATPases have 2 components, F(1) - the catalytic core - and F(0) - the membrane proton channel. F(1) has five subunits: alpha(3), beta(3), gamma(1), delta(1), epsilon(1). F(0) has three main subunits: a(1), b(2) and c(10-14). The alpha and beta chains form an alternating ring which encloses part of the gamma chain. F(1) is attached to F(0) by a central stalk formed by the gamma and epsilon chains, while a peripheral stalk is formed by the delta and b chains.</text>
</comment>
<comment type="subcellular location">
    <subcellularLocation>
        <location evidence="1">Cell inner membrane</location>
        <topology evidence="1">Single-pass membrane protein</topology>
    </subcellularLocation>
</comment>
<comment type="similarity">
    <text evidence="1">Belongs to the ATPase B chain family.</text>
</comment>
<accession>A4VS66</accession>
<proteinExistence type="inferred from homology"/>